<feature type="chain" id="PRO_1000147626" description="Threonine/serine transporter TdcC">
    <location>
        <begin position="1"/>
        <end position="443"/>
    </location>
</feature>
<feature type="transmembrane region" description="Helical" evidence="1">
    <location>
        <begin position="22"/>
        <end position="42"/>
    </location>
</feature>
<feature type="transmembrane region" description="Helical" evidence="1">
    <location>
        <begin position="44"/>
        <end position="64"/>
    </location>
</feature>
<feature type="transmembrane region" description="Helical" evidence="1">
    <location>
        <begin position="97"/>
        <end position="117"/>
    </location>
</feature>
<feature type="transmembrane region" description="Helical" evidence="1">
    <location>
        <begin position="140"/>
        <end position="160"/>
    </location>
</feature>
<feature type="transmembrane region" description="Helical" evidence="1">
    <location>
        <begin position="163"/>
        <end position="183"/>
    </location>
</feature>
<feature type="transmembrane region" description="Helical" evidence="1">
    <location>
        <begin position="207"/>
        <end position="227"/>
    </location>
</feature>
<feature type="transmembrane region" description="Helical" evidence="1">
    <location>
        <begin position="261"/>
        <end position="281"/>
    </location>
</feature>
<feature type="transmembrane region" description="Helical" evidence="1">
    <location>
        <begin position="311"/>
        <end position="331"/>
    </location>
</feature>
<feature type="transmembrane region" description="Helical" evidence="1">
    <location>
        <begin position="366"/>
        <end position="386"/>
    </location>
</feature>
<feature type="transmembrane region" description="Helical" evidence="1">
    <location>
        <begin position="389"/>
        <end position="409"/>
    </location>
</feature>
<feature type="transmembrane region" description="Helical" evidence="1">
    <location>
        <begin position="423"/>
        <end position="443"/>
    </location>
</feature>
<organism>
    <name type="scientific">Escherichia coli O157:H7 (strain EC4115 / EHEC)</name>
    <dbReference type="NCBI Taxonomy" id="444450"/>
    <lineage>
        <taxon>Bacteria</taxon>
        <taxon>Pseudomonadati</taxon>
        <taxon>Pseudomonadota</taxon>
        <taxon>Gammaproteobacteria</taxon>
        <taxon>Enterobacterales</taxon>
        <taxon>Enterobacteriaceae</taxon>
        <taxon>Escherichia</taxon>
    </lineage>
</organism>
<accession>B5YS06</accession>
<comment type="function">
    <text evidence="1">Involved in the import of threonine and serine into the cell, with the concomitant import of a proton (symport system).</text>
</comment>
<comment type="catalytic activity">
    <reaction evidence="1">
        <text>L-threonine(in) + H(+)(in) = L-threonine(out) + H(+)(out)</text>
        <dbReference type="Rhea" id="RHEA:28883"/>
        <dbReference type="ChEBI" id="CHEBI:15378"/>
        <dbReference type="ChEBI" id="CHEBI:57926"/>
    </reaction>
    <physiologicalReaction direction="right-to-left" evidence="1">
        <dbReference type="Rhea" id="RHEA:28885"/>
    </physiologicalReaction>
</comment>
<comment type="catalytic activity">
    <reaction evidence="1">
        <text>L-serine(in) + H(+)(in) = L-serine(out) + H(+)(out)</text>
        <dbReference type="Rhea" id="RHEA:28887"/>
        <dbReference type="ChEBI" id="CHEBI:15378"/>
        <dbReference type="ChEBI" id="CHEBI:33384"/>
    </reaction>
    <physiologicalReaction direction="right-to-left" evidence="1">
        <dbReference type="Rhea" id="RHEA:28889"/>
    </physiologicalReaction>
</comment>
<comment type="subcellular location">
    <subcellularLocation>
        <location evidence="1">Cell inner membrane</location>
        <topology evidence="1">Multi-pass membrane protein</topology>
    </subcellularLocation>
</comment>
<comment type="similarity">
    <text evidence="1">Belongs to the amino acid/polyamine transporter 2 family. SdaC/TdcC subfamily.</text>
</comment>
<proteinExistence type="inferred from homology"/>
<sequence>MSTSDSIVSSQTKQSSWRKSDTTWTLGLFGTAIGAGVLFFPIRAGFGGLIPILLMLVLAYPIAFYCHRALARLCLSGSNPSGNITETVEEHFGKTGGVVITFLYFFAICPLLWIYGVTITNTFMTFWENQLGFAPLNRGFVALFLLLLMAFVIWFGKDLMVKVMSYLVWPFIASLVLISLSLIPYWNSAVIDQVDLGSLSLTGHDGILITVWLGISIMVFSFNFSPIVSSFVVSKREEYEKDFGRDFTERKCSQIISRASMLMVAVVMFFAFSCLFTLSPANMAEAKAQNIPVLSYLANHFASMTGTKTTFAITLEYAASIIALVAIFKSFFGHYLGTLEGLNGLVLKFGYKGDKTKVSLGKLNTISMIFIMGSTWVVAYANPNILDLIEAMGAPIIASLLCLLPMYAIRKAPSLAKYRGRLDNVFVTVIGLLTILNIVYKLF</sequence>
<protein>
    <recommendedName>
        <fullName evidence="1">Threonine/serine transporter TdcC</fullName>
    </recommendedName>
    <alternativeName>
        <fullName evidence="1">H(+)/threonine-serine symporter</fullName>
    </alternativeName>
</protein>
<evidence type="ECO:0000255" key="1">
    <source>
        <dbReference type="HAMAP-Rule" id="MF_01583"/>
    </source>
</evidence>
<gene>
    <name evidence="1" type="primary">tdcC</name>
    <name type="ordered locus">ECH74115_4429</name>
</gene>
<keyword id="KW-0029">Amino-acid transport</keyword>
<keyword id="KW-0997">Cell inner membrane</keyword>
<keyword id="KW-1003">Cell membrane</keyword>
<keyword id="KW-0472">Membrane</keyword>
<keyword id="KW-0769">Symport</keyword>
<keyword id="KW-0812">Transmembrane</keyword>
<keyword id="KW-1133">Transmembrane helix</keyword>
<keyword id="KW-0813">Transport</keyword>
<reference key="1">
    <citation type="journal article" date="2011" name="Proc. Natl. Acad. Sci. U.S.A.">
        <title>Genomic anatomy of Escherichia coli O157:H7 outbreaks.</title>
        <authorList>
            <person name="Eppinger M."/>
            <person name="Mammel M.K."/>
            <person name="Leclerc J.E."/>
            <person name="Ravel J."/>
            <person name="Cebula T.A."/>
        </authorList>
    </citation>
    <scope>NUCLEOTIDE SEQUENCE [LARGE SCALE GENOMIC DNA]</scope>
    <source>
        <strain>EC4115 / EHEC</strain>
    </source>
</reference>
<name>TDCC_ECO5E</name>
<dbReference type="EMBL" id="CP001164">
    <property type="protein sequence ID" value="ACI36982.1"/>
    <property type="molecule type" value="Genomic_DNA"/>
</dbReference>
<dbReference type="RefSeq" id="WP_000107723.1">
    <property type="nucleotide sequence ID" value="NC_011353.1"/>
</dbReference>
<dbReference type="SMR" id="B5YS06"/>
<dbReference type="GeneID" id="93778869"/>
<dbReference type="KEGG" id="ecf:ECH74115_4429"/>
<dbReference type="HOGENOM" id="CLU_052043_1_1_6"/>
<dbReference type="GO" id="GO:0005886">
    <property type="term" value="C:plasma membrane"/>
    <property type="evidence" value="ECO:0007669"/>
    <property type="project" value="UniProtKB-SubCell"/>
</dbReference>
<dbReference type="GO" id="GO:0015194">
    <property type="term" value="F:L-serine transmembrane transporter activity"/>
    <property type="evidence" value="ECO:0007669"/>
    <property type="project" value="InterPro"/>
</dbReference>
<dbReference type="GO" id="GO:0015293">
    <property type="term" value="F:symporter activity"/>
    <property type="evidence" value="ECO:0007669"/>
    <property type="project" value="UniProtKB-UniRule"/>
</dbReference>
<dbReference type="GO" id="GO:0015565">
    <property type="term" value="F:threonine efflux transmembrane transporter activity"/>
    <property type="evidence" value="ECO:0007669"/>
    <property type="project" value="InterPro"/>
</dbReference>
<dbReference type="HAMAP" id="MF_01583">
    <property type="entry name" value="Thr_Ser_transp_TdcC"/>
    <property type="match status" value="1"/>
</dbReference>
<dbReference type="InterPro" id="IPR018227">
    <property type="entry name" value="Amino_acid_transport_2"/>
</dbReference>
<dbReference type="InterPro" id="IPR004694">
    <property type="entry name" value="Hydroxy_aa_transpt"/>
</dbReference>
<dbReference type="InterPro" id="IPR023726">
    <property type="entry name" value="Thr/Ser_transpt_TdcC"/>
</dbReference>
<dbReference type="NCBIfam" id="NF010152">
    <property type="entry name" value="PRK13629.1"/>
    <property type="match status" value="1"/>
</dbReference>
<dbReference type="NCBIfam" id="TIGR00814">
    <property type="entry name" value="stp"/>
    <property type="match status" value="1"/>
</dbReference>
<dbReference type="PANTHER" id="PTHR35334">
    <property type="entry name" value="SERINE TRANSPORTER"/>
    <property type="match status" value="1"/>
</dbReference>
<dbReference type="PANTHER" id="PTHR35334:SF1">
    <property type="entry name" value="THREONINE_SERINE TRANSPORTER TDCC"/>
    <property type="match status" value="1"/>
</dbReference>
<dbReference type="Pfam" id="PF03222">
    <property type="entry name" value="Trp_Tyr_perm"/>
    <property type="match status" value="1"/>
</dbReference>